<reference key="1">
    <citation type="journal article" date="2002" name="DNA Res.">
        <title>Complete genomic sequence of nitrogen-fixing symbiotic bacterium Bradyrhizobium japonicum USDA110.</title>
        <authorList>
            <person name="Kaneko T."/>
            <person name="Nakamura Y."/>
            <person name="Sato S."/>
            <person name="Minamisawa K."/>
            <person name="Uchiumi T."/>
            <person name="Sasamoto S."/>
            <person name="Watanabe A."/>
            <person name="Idesawa K."/>
            <person name="Iriguchi M."/>
            <person name="Kawashima K."/>
            <person name="Kohara M."/>
            <person name="Matsumoto M."/>
            <person name="Shimpo S."/>
            <person name="Tsuruoka H."/>
            <person name="Wada T."/>
            <person name="Yamada M."/>
            <person name="Tabata S."/>
        </authorList>
    </citation>
    <scope>NUCLEOTIDE SEQUENCE [LARGE SCALE GENOMIC DNA]</scope>
    <source>
        <strain>JCM 10833 / BCRC 13528 / IAM 13628 / NBRC 14792 / USDA 110</strain>
    </source>
</reference>
<name>FLUC2_BRADU</name>
<dbReference type="EMBL" id="BA000040">
    <property type="protein sequence ID" value="BAC47904.1"/>
    <property type="molecule type" value="Genomic_DNA"/>
</dbReference>
<dbReference type="RefSeq" id="NP_769279.1">
    <property type="nucleotide sequence ID" value="NC_004463.1"/>
</dbReference>
<dbReference type="RefSeq" id="WP_011085425.1">
    <property type="nucleotide sequence ID" value="NC_004463.1"/>
</dbReference>
<dbReference type="SMR" id="Q89RX3"/>
<dbReference type="FunCoup" id="Q89RX3">
    <property type="interactions" value="378"/>
</dbReference>
<dbReference type="STRING" id="224911.AAV28_10190"/>
<dbReference type="EnsemblBacteria" id="BAC47904">
    <property type="protein sequence ID" value="BAC47904"/>
    <property type="gene ID" value="BAC47904"/>
</dbReference>
<dbReference type="GeneID" id="46489687"/>
<dbReference type="KEGG" id="bja:bll2639"/>
<dbReference type="PATRIC" id="fig|224911.44.peg.2239"/>
<dbReference type="eggNOG" id="COG0239">
    <property type="taxonomic scope" value="Bacteria"/>
</dbReference>
<dbReference type="HOGENOM" id="CLU_114342_3_0_5"/>
<dbReference type="InParanoid" id="Q89RX3"/>
<dbReference type="OrthoDB" id="9806299at2"/>
<dbReference type="PhylomeDB" id="Q89RX3"/>
<dbReference type="Proteomes" id="UP000002526">
    <property type="component" value="Chromosome"/>
</dbReference>
<dbReference type="GO" id="GO:0005886">
    <property type="term" value="C:plasma membrane"/>
    <property type="evidence" value="ECO:0000318"/>
    <property type="project" value="GO_Central"/>
</dbReference>
<dbReference type="GO" id="GO:0062054">
    <property type="term" value="F:fluoride channel activity"/>
    <property type="evidence" value="ECO:0007669"/>
    <property type="project" value="UniProtKB-UniRule"/>
</dbReference>
<dbReference type="GO" id="GO:1903425">
    <property type="term" value="F:fluoride transmembrane transporter activity"/>
    <property type="evidence" value="ECO:0000318"/>
    <property type="project" value="GO_Central"/>
</dbReference>
<dbReference type="GO" id="GO:0046872">
    <property type="term" value="F:metal ion binding"/>
    <property type="evidence" value="ECO:0007669"/>
    <property type="project" value="UniProtKB-KW"/>
</dbReference>
<dbReference type="GO" id="GO:0140114">
    <property type="term" value="P:cellular detoxification of fluoride"/>
    <property type="evidence" value="ECO:0007669"/>
    <property type="project" value="UniProtKB-UniRule"/>
</dbReference>
<dbReference type="GO" id="GO:1903424">
    <property type="term" value="P:fluoride transmembrane transport"/>
    <property type="evidence" value="ECO:0000318"/>
    <property type="project" value="GO_Central"/>
</dbReference>
<dbReference type="HAMAP" id="MF_00454">
    <property type="entry name" value="FluC"/>
    <property type="match status" value="1"/>
</dbReference>
<dbReference type="InterPro" id="IPR003691">
    <property type="entry name" value="FluC"/>
</dbReference>
<dbReference type="NCBIfam" id="TIGR00494">
    <property type="entry name" value="crcB"/>
    <property type="match status" value="1"/>
</dbReference>
<dbReference type="NCBIfam" id="NF010799">
    <property type="entry name" value="PRK14203.1"/>
    <property type="match status" value="1"/>
</dbReference>
<dbReference type="PANTHER" id="PTHR28259">
    <property type="entry name" value="FLUORIDE EXPORT PROTEIN 1-RELATED"/>
    <property type="match status" value="1"/>
</dbReference>
<dbReference type="PANTHER" id="PTHR28259:SF1">
    <property type="entry name" value="FLUORIDE EXPORT PROTEIN 1-RELATED"/>
    <property type="match status" value="1"/>
</dbReference>
<dbReference type="Pfam" id="PF02537">
    <property type="entry name" value="CRCB"/>
    <property type="match status" value="1"/>
</dbReference>
<accession>Q89RX3</accession>
<comment type="function">
    <text evidence="1">Fluoride-specific ion channel. Important for reducing fluoride concentration in the cell, thus reducing its toxicity.</text>
</comment>
<comment type="catalytic activity">
    <reaction evidence="1">
        <text>fluoride(in) = fluoride(out)</text>
        <dbReference type="Rhea" id="RHEA:76159"/>
        <dbReference type="ChEBI" id="CHEBI:17051"/>
    </reaction>
    <physiologicalReaction direction="left-to-right" evidence="1">
        <dbReference type="Rhea" id="RHEA:76160"/>
    </physiologicalReaction>
</comment>
<comment type="activity regulation">
    <text evidence="1">Na(+) is not transported, but it plays an essential structural role and its presence is essential for fluoride channel function.</text>
</comment>
<comment type="subcellular location">
    <subcellularLocation>
        <location evidence="1">Cell inner membrane</location>
        <topology evidence="1">Multi-pass membrane protein</topology>
    </subcellularLocation>
</comment>
<comment type="similarity">
    <text evidence="1">Belongs to the fluoride channel Fluc/FEX (TC 1.A.43) family.</text>
</comment>
<evidence type="ECO:0000255" key="1">
    <source>
        <dbReference type="HAMAP-Rule" id="MF_00454"/>
    </source>
</evidence>
<sequence length="137" mass="13971">MRMGGSFVVLSGVIAIVVGSVLGGCARYFISGAVARRLGETFPWGTMTINVTGAFLIGIFGALATHPGSMFASPNPWLFAVTGFLGCYTTVSSFSLQTLTLARNGEPMHALGNVAFSVGLCLAAVSCGFLLADGLGG</sequence>
<protein>
    <recommendedName>
        <fullName evidence="1">Fluoride-specific ion channel FluC 2</fullName>
    </recommendedName>
</protein>
<proteinExistence type="inferred from homology"/>
<gene>
    <name evidence="1" type="primary">fluC2</name>
    <name evidence="1" type="synonym">crcB2</name>
    <name type="ordered locus">bll2639</name>
</gene>
<keyword id="KW-0997">Cell inner membrane</keyword>
<keyword id="KW-1003">Cell membrane</keyword>
<keyword id="KW-0407">Ion channel</keyword>
<keyword id="KW-0406">Ion transport</keyword>
<keyword id="KW-0472">Membrane</keyword>
<keyword id="KW-0479">Metal-binding</keyword>
<keyword id="KW-1185">Reference proteome</keyword>
<keyword id="KW-0915">Sodium</keyword>
<keyword id="KW-0812">Transmembrane</keyword>
<keyword id="KW-1133">Transmembrane helix</keyword>
<keyword id="KW-0813">Transport</keyword>
<organism>
    <name type="scientific">Bradyrhizobium diazoefficiens (strain JCM 10833 / BCRC 13528 / IAM 13628 / NBRC 14792 / USDA 110)</name>
    <dbReference type="NCBI Taxonomy" id="224911"/>
    <lineage>
        <taxon>Bacteria</taxon>
        <taxon>Pseudomonadati</taxon>
        <taxon>Pseudomonadota</taxon>
        <taxon>Alphaproteobacteria</taxon>
        <taxon>Hyphomicrobiales</taxon>
        <taxon>Nitrobacteraceae</taxon>
        <taxon>Bradyrhizobium</taxon>
    </lineage>
</organism>
<feature type="chain" id="PRO_0000110066" description="Fluoride-specific ion channel FluC 2">
    <location>
        <begin position="1"/>
        <end position="137"/>
    </location>
</feature>
<feature type="transmembrane region" description="Helical" evidence="1">
    <location>
        <begin position="3"/>
        <end position="23"/>
    </location>
</feature>
<feature type="transmembrane region" description="Helical" evidence="1">
    <location>
        <begin position="44"/>
        <end position="64"/>
    </location>
</feature>
<feature type="transmembrane region" description="Helical" evidence="1">
    <location>
        <begin position="76"/>
        <end position="96"/>
    </location>
</feature>
<feature type="transmembrane region" description="Helical" evidence="1">
    <location>
        <begin position="111"/>
        <end position="131"/>
    </location>
</feature>
<feature type="binding site" evidence="1">
    <location>
        <position position="86"/>
    </location>
    <ligand>
        <name>Na(+)</name>
        <dbReference type="ChEBI" id="CHEBI:29101"/>
        <note>structural</note>
    </ligand>
</feature>
<feature type="binding site" evidence="1">
    <location>
        <position position="89"/>
    </location>
    <ligand>
        <name>Na(+)</name>
        <dbReference type="ChEBI" id="CHEBI:29101"/>
        <note>structural</note>
    </ligand>
</feature>